<proteinExistence type="inferred from homology"/>
<reference key="1">
    <citation type="submission" date="2008-04" db="EMBL/GenBank/DDBJ databases">
        <title>Complete sequence of chromosome 1 of Burkholderia ambifaria MC40-6.</title>
        <authorList>
            <person name="Copeland A."/>
            <person name="Lucas S."/>
            <person name="Lapidus A."/>
            <person name="Glavina del Rio T."/>
            <person name="Dalin E."/>
            <person name="Tice H."/>
            <person name="Pitluck S."/>
            <person name="Chain P."/>
            <person name="Malfatti S."/>
            <person name="Shin M."/>
            <person name="Vergez L."/>
            <person name="Lang D."/>
            <person name="Schmutz J."/>
            <person name="Larimer F."/>
            <person name="Land M."/>
            <person name="Hauser L."/>
            <person name="Kyrpides N."/>
            <person name="Lykidis A."/>
            <person name="Ramette A."/>
            <person name="Konstantinidis K."/>
            <person name="Tiedje J."/>
            <person name="Richardson P."/>
        </authorList>
    </citation>
    <scope>NUCLEOTIDE SEQUENCE [LARGE SCALE GENOMIC DNA]</scope>
    <source>
        <strain>MC40-6</strain>
    </source>
</reference>
<gene>
    <name evidence="1" type="primary">metXS</name>
    <name type="ordered locus">BamMC406_3037</name>
</gene>
<sequence length="381" mass="41952">MESIGIVAPQTMHFAEPLRLQSGSVIGNYQLVVETYGELNAARSNAVLVCHALNASHHVAGVYADDPRSTGWWDNLVGPGKPLDTNRFFVIGVNNLGSCFGSTGPMSIDPSSGKPYGARFPVVTVEDWVHAQARVADAFGIERFAAVMGGSLGGMQALAWSLMYPERVAHCIDIASTPKLSAQNIAFNEVARSAILSDPDFHGGDYYAHGVKPKRGLRVARMIGHITYLSDDDMAEKFGRALRRADGALDAYNFSFDVEFEVESYLRYQGDKFADYFDANTYLLITRALDYFDPAKAFDGNLTAALAHTQAKYLIASFSTDWRFAPARSREIVKALLDNKRTVSYAEIDAPHGHDAFLLDDARYHNLLRAYYERIANEVGA</sequence>
<name>METXS_BURA4</name>
<comment type="function">
    <text evidence="1">Transfers a succinyl group from succinyl-CoA to L-homoserine, forming succinyl-L-homoserine.</text>
</comment>
<comment type="catalytic activity">
    <reaction evidence="1">
        <text>L-homoserine + succinyl-CoA = O-succinyl-L-homoserine + CoA</text>
        <dbReference type="Rhea" id="RHEA:22008"/>
        <dbReference type="ChEBI" id="CHEBI:57287"/>
        <dbReference type="ChEBI" id="CHEBI:57292"/>
        <dbReference type="ChEBI" id="CHEBI:57476"/>
        <dbReference type="ChEBI" id="CHEBI:57661"/>
        <dbReference type="EC" id="2.3.1.46"/>
    </reaction>
</comment>
<comment type="pathway">
    <text evidence="1">Amino-acid biosynthesis; L-methionine biosynthesis via de novo pathway; O-succinyl-L-homoserine from L-homoserine: step 1/1.</text>
</comment>
<comment type="subunit">
    <text evidence="1">Homodimer.</text>
</comment>
<comment type="subcellular location">
    <subcellularLocation>
        <location evidence="1">Cytoplasm</location>
    </subcellularLocation>
</comment>
<comment type="similarity">
    <text evidence="1">Belongs to the AB hydrolase superfamily. MetX family.</text>
</comment>
<keyword id="KW-0012">Acyltransferase</keyword>
<keyword id="KW-0028">Amino-acid biosynthesis</keyword>
<keyword id="KW-0963">Cytoplasm</keyword>
<keyword id="KW-0486">Methionine biosynthesis</keyword>
<keyword id="KW-0808">Transferase</keyword>
<evidence type="ECO:0000255" key="1">
    <source>
        <dbReference type="HAMAP-Rule" id="MF_00296"/>
    </source>
</evidence>
<feature type="chain" id="PRO_1000115212" description="Homoserine O-succinyltransferase">
    <location>
        <begin position="1"/>
        <end position="381"/>
    </location>
</feature>
<feature type="domain" description="AB hydrolase-1" evidence="1">
    <location>
        <begin position="45"/>
        <end position="360"/>
    </location>
</feature>
<feature type="active site" description="Nucleophile" evidence="1">
    <location>
        <position position="151"/>
    </location>
</feature>
<feature type="active site" evidence="1">
    <location>
        <position position="321"/>
    </location>
</feature>
<feature type="active site" evidence="1">
    <location>
        <position position="354"/>
    </location>
</feature>
<feature type="binding site" evidence="1">
    <location>
        <position position="221"/>
    </location>
    <ligand>
        <name>substrate</name>
    </ligand>
</feature>
<feature type="binding site" evidence="1">
    <location>
        <position position="355"/>
    </location>
    <ligand>
        <name>substrate</name>
    </ligand>
</feature>
<feature type="site" description="Important for acyl-CoA specificity" evidence="1">
    <location>
        <position position="323"/>
    </location>
</feature>
<accession>B1YPU9</accession>
<dbReference type="EC" id="2.3.1.46" evidence="1"/>
<dbReference type="EMBL" id="CP001025">
    <property type="protein sequence ID" value="ACB65513.1"/>
    <property type="molecule type" value="Genomic_DNA"/>
</dbReference>
<dbReference type="SMR" id="B1YPU9"/>
<dbReference type="ESTHER" id="burca-metx">
    <property type="family name" value="Homoserine_transacetylase"/>
</dbReference>
<dbReference type="KEGG" id="bac:BamMC406_3037"/>
<dbReference type="HOGENOM" id="CLU_028760_1_2_4"/>
<dbReference type="OrthoDB" id="9800754at2"/>
<dbReference type="UniPathway" id="UPA00051">
    <property type="reaction ID" value="UER00075"/>
</dbReference>
<dbReference type="Proteomes" id="UP000001680">
    <property type="component" value="Chromosome 1"/>
</dbReference>
<dbReference type="GO" id="GO:0005737">
    <property type="term" value="C:cytoplasm"/>
    <property type="evidence" value="ECO:0007669"/>
    <property type="project" value="UniProtKB-SubCell"/>
</dbReference>
<dbReference type="GO" id="GO:0004414">
    <property type="term" value="F:homoserine O-acetyltransferase activity"/>
    <property type="evidence" value="ECO:0007669"/>
    <property type="project" value="TreeGrafter"/>
</dbReference>
<dbReference type="GO" id="GO:0008899">
    <property type="term" value="F:homoserine O-succinyltransferase activity"/>
    <property type="evidence" value="ECO:0007669"/>
    <property type="project" value="UniProtKB-UniRule"/>
</dbReference>
<dbReference type="GO" id="GO:0009092">
    <property type="term" value="P:homoserine metabolic process"/>
    <property type="evidence" value="ECO:0007669"/>
    <property type="project" value="TreeGrafter"/>
</dbReference>
<dbReference type="GO" id="GO:0009086">
    <property type="term" value="P:methionine biosynthetic process"/>
    <property type="evidence" value="ECO:0007669"/>
    <property type="project" value="UniProtKB-UniRule"/>
</dbReference>
<dbReference type="FunFam" id="1.10.1740.110:FF:000001">
    <property type="entry name" value="Homoserine O-acetyltransferase"/>
    <property type="match status" value="1"/>
</dbReference>
<dbReference type="Gene3D" id="1.10.1740.110">
    <property type="match status" value="1"/>
</dbReference>
<dbReference type="Gene3D" id="3.40.50.1820">
    <property type="entry name" value="alpha/beta hydrolase"/>
    <property type="match status" value="1"/>
</dbReference>
<dbReference type="HAMAP" id="MF_00296">
    <property type="entry name" value="MetX_acyltransf"/>
    <property type="match status" value="1"/>
</dbReference>
<dbReference type="InterPro" id="IPR000073">
    <property type="entry name" value="AB_hydrolase_1"/>
</dbReference>
<dbReference type="InterPro" id="IPR029058">
    <property type="entry name" value="AB_hydrolase_fold"/>
</dbReference>
<dbReference type="InterPro" id="IPR008220">
    <property type="entry name" value="HAT_MetX-like"/>
</dbReference>
<dbReference type="NCBIfam" id="TIGR01392">
    <property type="entry name" value="homoserO_Ac_trn"/>
    <property type="match status" value="1"/>
</dbReference>
<dbReference type="NCBIfam" id="NF001209">
    <property type="entry name" value="PRK00175.1"/>
    <property type="match status" value="1"/>
</dbReference>
<dbReference type="PANTHER" id="PTHR32268">
    <property type="entry name" value="HOMOSERINE O-ACETYLTRANSFERASE"/>
    <property type="match status" value="1"/>
</dbReference>
<dbReference type="PANTHER" id="PTHR32268:SF11">
    <property type="entry name" value="HOMOSERINE O-ACETYLTRANSFERASE"/>
    <property type="match status" value="1"/>
</dbReference>
<dbReference type="Pfam" id="PF00561">
    <property type="entry name" value="Abhydrolase_1"/>
    <property type="match status" value="1"/>
</dbReference>
<dbReference type="PIRSF" id="PIRSF000443">
    <property type="entry name" value="Homoser_Ac_trans"/>
    <property type="match status" value="1"/>
</dbReference>
<dbReference type="SUPFAM" id="SSF53474">
    <property type="entry name" value="alpha/beta-Hydrolases"/>
    <property type="match status" value="1"/>
</dbReference>
<organism>
    <name type="scientific">Burkholderia ambifaria (strain MC40-6)</name>
    <dbReference type="NCBI Taxonomy" id="398577"/>
    <lineage>
        <taxon>Bacteria</taxon>
        <taxon>Pseudomonadati</taxon>
        <taxon>Pseudomonadota</taxon>
        <taxon>Betaproteobacteria</taxon>
        <taxon>Burkholderiales</taxon>
        <taxon>Burkholderiaceae</taxon>
        <taxon>Burkholderia</taxon>
        <taxon>Burkholderia cepacia complex</taxon>
    </lineage>
</organism>
<protein>
    <recommendedName>
        <fullName evidence="1">Homoserine O-succinyltransferase</fullName>
        <shortName evidence="1">HST</shortName>
        <ecNumber evidence="1">2.3.1.46</ecNumber>
    </recommendedName>
    <alternativeName>
        <fullName evidence="1">Homoserine transsuccinylase</fullName>
        <shortName evidence="1">HTS</shortName>
    </alternativeName>
</protein>